<gene>
    <name evidence="1" type="primary">thiG</name>
    <name type="ordered locus">Sbal223_2028</name>
</gene>
<organism>
    <name type="scientific">Shewanella baltica (strain OS223)</name>
    <dbReference type="NCBI Taxonomy" id="407976"/>
    <lineage>
        <taxon>Bacteria</taxon>
        <taxon>Pseudomonadati</taxon>
        <taxon>Pseudomonadota</taxon>
        <taxon>Gammaproteobacteria</taxon>
        <taxon>Alteromonadales</taxon>
        <taxon>Shewanellaceae</taxon>
        <taxon>Shewanella</taxon>
    </lineage>
</organism>
<dbReference type="EC" id="2.8.1.10" evidence="1"/>
<dbReference type="EMBL" id="CP001252">
    <property type="protein sequence ID" value="ACK46532.1"/>
    <property type="molecule type" value="Genomic_DNA"/>
</dbReference>
<dbReference type="RefSeq" id="WP_012089303.1">
    <property type="nucleotide sequence ID" value="NC_011663.1"/>
</dbReference>
<dbReference type="SMR" id="B8EA59"/>
<dbReference type="KEGG" id="sbp:Sbal223_2028"/>
<dbReference type="HOGENOM" id="CLU_062233_1_0_6"/>
<dbReference type="UniPathway" id="UPA00060"/>
<dbReference type="Proteomes" id="UP000002507">
    <property type="component" value="Chromosome"/>
</dbReference>
<dbReference type="GO" id="GO:0005737">
    <property type="term" value="C:cytoplasm"/>
    <property type="evidence" value="ECO:0007669"/>
    <property type="project" value="UniProtKB-SubCell"/>
</dbReference>
<dbReference type="GO" id="GO:1990107">
    <property type="term" value="F:thiazole synthase activity"/>
    <property type="evidence" value="ECO:0007669"/>
    <property type="project" value="UniProtKB-EC"/>
</dbReference>
<dbReference type="GO" id="GO:0009229">
    <property type="term" value="P:thiamine diphosphate biosynthetic process"/>
    <property type="evidence" value="ECO:0007669"/>
    <property type="project" value="UniProtKB-UniRule"/>
</dbReference>
<dbReference type="CDD" id="cd04728">
    <property type="entry name" value="ThiG"/>
    <property type="match status" value="1"/>
</dbReference>
<dbReference type="FunFam" id="3.20.20.70:FF:000049">
    <property type="entry name" value="Thiazole synthase"/>
    <property type="match status" value="1"/>
</dbReference>
<dbReference type="Gene3D" id="3.20.20.70">
    <property type="entry name" value="Aldolase class I"/>
    <property type="match status" value="1"/>
</dbReference>
<dbReference type="HAMAP" id="MF_00443">
    <property type="entry name" value="ThiG"/>
    <property type="match status" value="1"/>
</dbReference>
<dbReference type="InterPro" id="IPR013785">
    <property type="entry name" value="Aldolase_TIM"/>
</dbReference>
<dbReference type="InterPro" id="IPR033983">
    <property type="entry name" value="Thiazole_synthase_ThiG"/>
</dbReference>
<dbReference type="InterPro" id="IPR008867">
    <property type="entry name" value="ThiG"/>
</dbReference>
<dbReference type="PANTHER" id="PTHR34266">
    <property type="entry name" value="THIAZOLE SYNTHASE"/>
    <property type="match status" value="1"/>
</dbReference>
<dbReference type="PANTHER" id="PTHR34266:SF2">
    <property type="entry name" value="THIAZOLE SYNTHASE"/>
    <property type="match status" value="1"/>
</dbReference>
<dbReference type="Pfam" id="PF05690">
    <property type="entry name" value="ThiG"/>
    <property type="match status" value="1"/>
</dbReference>
<dbReference type="SUPFAM" id="SSF110399">
    <property type="entry name" value="ThiG-like"/>
    <property type="match status" value="1"/>
</dbReference>
<feature type="chain" id="PRO_1000196898" description="Thiazole synthase">
    <location>
        <begin position="1"/>
        <end position="254"/>
    </location>
</feature>
<feature type="active site" description="Schiff-base intermediate with DXP" evidence="1">
    <location>
        <position position="95"/>
    </location>
</feature>
<feature type="binding site" evidence="1">
    <location>
        <position position="156"/>
    </location>
    <ligand>
        <name>1-deoxy-D-xylulose 5-phosphate</name>
        <dbReference type="ChEBI" id="CHEBI:57792"/>
    </ligand>
</feature>
<feature type="binding site" evidence="1">
    <location>
        <begin position="182"/>
        <end position="183"/>
    </location>
    <ligand>
        <name>1-deoxy-D-xylulose 5-phosphate</name>
        <dbReference type="ChEBI" id="CHEBI:57792"/>
    </ligand>
</feature>
<feature type="binding site" evidence="1">
    <location>
        <begin position="204"/>
        <end position="205"/>
    </location>
    <ligand>
        <name>1-deoxy-D-xylulose 5-phosphate</name>
        <dbReference type="ChEBI" id="CHEBI:57792"/>
    </ligand>
</feature>
<proteinExistence type="inferred from homology"/>
<sequence>MLTIADVEFESRLFTGTGKFSNSQVMLEAITASKSQLVTVAMKRIDFKMGLDDLLTPLRQAGVRLLPNTSGARNAKEAVFAAELAREMLGTHWIKLEIHPDPKYLMPDAIETLEAARILCEKGFIVLPYVHADPVLCRRLEEVGCAAVMPLASPIGSNQGLVTESFLKIIIEQARVPVVIDAGIGAPSQAARAMELGADAVLVNTAIASSASPIVMAECFKEAVQCGRRAFEAGLGRVQTGAVHTSPLTGFLNQ</sequence>
<comment type="function">
    <text evidence="1">Catalyzes the rearrangement of 1-deoxy-D-xylulose 5-phosphate (DXP) to produce the thiazole phosphate moiety of thiamine. Sulfur is provided by the thiocarboxylate moiety of the carrier protein ThiS. In vitro, sulfur can be provided by H(2)S.</text>
</comment>
<comment type="catalytic activity">
    <reaction evidence="1">
        <text>[ThiS sulfur-carrier protein]-C-terminal-Gly-aminoethanethioate + 2-iminoacetate + 1-deoxy-D-xylulose 5-phosphate = [ThiS sulfur-carrier protein]-C-terminal Gly-Gly + 2-[(2R,5Z)-2-carboxy-4-methylthiazol-5(2H)-ylidene]ethyl phosphate + 2 H2O + H(+)</text>
        <dbReference type="Rhea" id="RHEA:26297"/>
        <dbReference type="Rhea" id="RHEA-COMP:12909"/>
        <dbReference type="Rhea" id="RHEA-COMP:19908"/>
        <dbReference type="ChEBI" id="CHEBI:15377"/>
        <dbReference type="ChEBI" id="CHEBI:15378"/>
        <dbReference type="ChEBI" id="CHEBI:57792"/>
        <dbReference type="ChEBI" id="CHEBI:62899"/>
        <dbReference type="ChEBI" id="CHEBI:77846"/>
        <dbReference type="ChEBI" id="CHEBI:90778"/>
        <dbReference type="ChEBI" id="CHEBI:232372"/>
        <dbReference type="EC" id="2.8.1.10"/>
    </reaction>
</comment>
<comment type="pathway">
    <text evidence="1">Cofactor biosynthesis; thiamine diphosphate biosynthesis.</text>
</comment>
<comment type="subunit">
    <text evidence="1">Homotetramer. Forms heterodimers with either ThiH or ThiS.</text>
</comment>
<comment type="subcellular location">
    <subcellularLocation>
        <location evidence="1">Cytoplasm</location>
    </subcellularLocation>
</comment>
<comment type="similarity">
    <text evidence="1">Belongs to the ThiG family.</text>
</comment>
<name>THIG_SHEB2</name>
<protein>
    <recommendedName>
        <fullName evidence="1">Thiazole synthase</fullName>
        <ecNumber evidence="1">2.8.1.10</ecNumber>
    </recommendedName>
</protein>
<accession>B8EA59</accession>
<reference key="1">
    <citation type="submission" date="2008-12" db="EMBL/GenBank/DDBJ databases">
        <title>Complete sequence of chromosome of Shewanella baltica OS223.</title>
        <authorList>
            <consortium name="US DOE Joint Genome Institute"/>
            <person name="Lucas S."/>
            <person name="Copeland A."/>
            <person name="Lapidus A."/>
            <person name="Glavina del Rio T."/>
            <person name="Dalin E."/>
            <person name="Tice H."/>
            <person name="Bruce D."/>
            <person name="Goodwin L."/>
            <person name="Pitluck S."/>
            <person name="Chertkov O."/>
            <person name="Meincke L."/>
            <person name="Brettin T."/>
            <person name="Detter J.C."/>
            <person name="Han C."/>
            <person name="Kuske C.R."/>
            <person name="Larimer F."/>
            <person name="Land M."/>
            <person name="Hauser L."/>
            <person name="Kyrpides N."/>
            <person name="Ovchinnikova G."/>
            <person name="Brettar I."/>
            <person name="Rodrigues J."/>
            <person name="Konstantinidis K."/>
            <person name="Tiedje J."/>
        </authorList>
    </citation>
    <scope>NUCLEOTIDE SEQUENCE [LARGE SCALE GENOMIC DNA]</scope>
    <source>
        <strain>OS223</strain>
    </source>
</reference>
<keyword id="KW-0963">Cytoplasm</keyword>
<keyword id="KW-0704">Schiff base</keyword>
<keyword id="KW-0784">Thiamine biosynthesis</keyword>
<keyword id="KW-0808">Transferase</keyword>
<evidence type="ECO:0000255" key="1">
    <source>
        <dbReference type="HAMAP-Rule" id="MF_00443"/>
    </source>
</evidence>